<name>SMI21_HUMAN</name>
<organism>
    <name type="scientific">Homo sapiens</name>
    <name type="common">Human</name>
    <dbReference type="NCBI Taxonomy" id="9606"/>
    <lineage>
        <taxon>Eukaryota</taxon>
        <taxon>Metazoa</taxon>
        <taxon>Chordata</taxon>
        <taxon>Craniata</taxon>
        <taxon>Vertebrata</taxon>
        <taxon>Euteleostomi</taxon>
        <taxon>Mammalia</taxon>
        <taxon>Eutheria</taxon>
        <taxon>Euarchontoglires</taxon>
        <taxon>Primates</taxon>
        <taxon>Haplorrhini</taxon>
        <taxon>Catarrhini</taxon>
        <taxon>Hominidae</taxon>
        <taxon>Homo</taxon>
    </lineage>
</organism>
<dbReference type="EMBL" id="BC107486">
    <property type="protein sequence ID" value="AAI07487.1"/>
    <property type="molecule type" value="mRNA"/>
</dbReference>
<dbReference type="CCDS" id="CCDS32845.1"/>
<dbReference type="RefSeq" id="NP_001032408.1">
    <property type="nucleotide sequence ID" value="NM_001037331.3"/>
</dbReference>
<dbReference type="BioGRID" id="129814">
    <property type="interactions" value="3"/>
</dbReference>
<dbReference type="IntAct" id="Q3B7S5">
    <property type="interactions" value="3"/>
</dbReference>
<dbReference type="MINT" id="Q3B7S5"/>
<dbReference type="STRING" id="9606.ENSP00000462106"/>
<dbReference type="BioMuta" id="SMIM21"/>
<dbReference type="PaxDb" id="9606-ENSP00000462106"/>
<dbReference type="Antibodypedia" id="49144">
    <property type="antibodies" value="12 antibodies from 7 providers"/>
</dbReference>
<dbReference type="DNASU" id="284274"/>
<dbReference type="Ensembl" id="ENST00000579022.5">
    <property type="protein sequence ID" value="ENSP00000462106.1"/>
    <property type="gene ID" value="ENSG00000206026.7"/>
</dbReference>
<dbReference type="GeneID" id="284274"/>
<dbReference type="KEGG" id="hsa:284274"/>
<dbReference type="MANE-Select" id="ENST00000579022.5">
    <property type="protein sequence ID" value="ENSP00000462106.1"/>
    <property type="RefSeq nucleotide sequence ID" value="NM_001037331.3"/>
    <property type="RefSeq protein sequence ID" value="NP_001032408.1"/>
</dbReference>
<dbReference type="UCSC" id="uc002lma.2">
    <property type="organism name" value="human"/>
</dbReference>
<dbReference type="AGR" id="HGNC:27598"/>
<dbReference type="CTD" id="284274"/>
<dbReference type="DisGeNET" id="284274"/>
<dbReference type="GeneCards" id="SMIM21"/>
<dbReference type="HGNC" id="HGNC:27598">
    <property type="gene designation" value="SMIM21"/>
</dbReference>
<dbReference type="HPA" id="ENSG00000206026">
    <property type="expression patterns" value="Tissue enriched (testis)"/>
</dbReference>
<dbReference type="neXtProt" id="NX_Q3B7S5"/>
<dbReference type="OpenTargets" id="ENSG00000206026"/>
<dbReference type="PharmGKB" id="PA162378613"/>
<dbReference type="VEuPathDB" id="HostDB:ENSG00000206026"/>
<dbReference type="eggNOG" id="ENOG502TEQP">
    <property type="taxonomic scope" value="Eukaryota"/>
</dbReference>
<dbReference type="GeneTree" id="ENSGT00940000166968"/>
<dbReference type="HOGENOM" id="CLU_2497188_0_0_1"/>
<dbReference type="InParanoid" id="Q3B7S5"/>
<dbReference type="OrthoDB" id="9535458at2759"/>
<dbReference type="PAN-GO" id="Q3B7S5">
    <property type="GO annotations" value="0 GO annotations based on evolutionary models"/>
</dbReference>
<dbReference type="PhylomeDB" id="Q3B7S5"/>
<dbReference type="PathwayCommons" id="Q3B7S5"/>
<dbReference type="SignaLink" id="Q3B7S5"/>
<dbReference type="BioGRID-ORCS" id="284274">
    <property type="hits" value="11 hits in 1134 CRISPR screens"/>
</dbReference>
<dbReference type="ChiTaRS" id="SMIM21">
    <property type="organism name" value="human"/>
</dbReference>
<dbReference type="GenomeRNAi" id="284274"/>
<dbReference type="Pharos" id="Q3B7S5">
    <property type="development level" value="Tdark"/>
</dbReference>
<dbReference type="PRO" id="PR:Q3B7S5"/>
<dbReference type="Proteomes" id="UP000005640">
    <property type="component" value="Chromosome 18"/>
</dbReference>
<dbReference type="RNAct" id="Q3B7S5">
    <property type="molecule type" value="protein"/>
</dbReference>
<dbReference type="Bgee" id="ENSG00000206026">
    <property type="expression patterns" value="Expressed in sperm and 6 other cell types or tissues"/>
</dbReference>
<dbReference type="ExpressionAtlas" id="Q3B7S5">
    <property type="expression patterns" value="baseline and differential"/>
</dbReference>
<dbReference type="GO" id="GO:0016020">
    <property type="term" value="C:membrane"/>
    <property type="evidence" value="ECO:0007669"/>
    <property type="project" value="UniProtKB-SubCell"/>
</dbReference>
<keyword id="KW-0472">Membrane</keyword>
<keyword id="KW-1185">Reference proteome</keyword>
<keyword id="KW-0812">Transmembrane</keyword>
<keyword id="KW-1133">Transmembrane helix</keyword>
<protein>
    <recommendedName>
        <fullName>Small integral membrane protein 21</fullName>
    </recommendedName>
</protein>
<comment type="interaction">
    <interactant intactId="EBI-23836218">
        <id>Q3B7S5</id>
    </interactant>
    <interactant intactId="EBI-2806959">
        <id>Q6ICB0</id>
        <label>DESI1</label>
    </interactant>
    <organismsDiffer>false</organismsDiffer>
    <experiments>3</experiments>
</comment>
<comment type="subcellular location">
    <subcellularLocation>
        <location evidence="2">Membrane</location>
        <topology evidence="2">Single-pass membrane protein</topology>
    </subcellularLocation>
</comment>
<reference key="1">
    <citation type="journal article" date="2004" name="Genome Res.">
        <title>The status, quality, and expansion of the NIH full-length cDNA project: the Mammalian Gene Collection (MGC).</title>
        <authorList>
            <consortium name="The MGC Project Team"/>
        </authorList>
    </citation>
    <scope>NUCLEOTIDE SEQUENCE [LARGE SCALE MRNA]</scope>
</reference>
<gene>
    <name type="primary">SMIM21</name>
    <name type="synonym">C18orf62</name>
</gene>
<proteinExistence type="evidence at protein level"/>
<sequence>MDQYVSTAPPRFPIAQLGTFKQDSAGMGRIFKGNLLQKKALTTFENEHHIRFFTLLVLFHVMVLLRNHSRIQGVSEDWKRANSIFRNFLRLKSSRNTAEAE</sequence>
<feature type="chain" id="PRO_0000340722" description="Small integral membrane protein 21">
    <location>
        <begin position="1"/>
        <end position="101"/>
    </location>
</feature>
<feature type="transmembrane region" description="Helical" evidence="1">
    <location>
        <begin position="49"/>
        <end position="65"/>
    </location>
</feature>
<accession>Q3B7S5</accession>
<evidence type="ECO:0000255" key="1"/>
<evidence type="ECO:0000305" key="2"/>